<gene>
    <name type="primary">mfsd4a</name>
    <name type="synonym">mfsd4</name>
    <name type="ORF">zgc:66461</name>
</gene>
<protein>
    <recommendedName>
        <fullName>Major facilitator superfamily domain-containing protein 4A</fullName>
    </recommendedName>
</protein>
<sequence>MTYLLNERICALFRSNWQHTLTYWSVFFSFGLCVAFLGPTILDLRCQTQSTLQEITLVFFSQQFFLFLGSTIGGFFSKTLVSSLSSLAVSTLIISVVFAIIPLCRELLMLAFAMAVSGLAMGTIDTISNLQLVKIYQKDSTVFLQALHFFVGLGALVSPLIADPFLSDTSCVIGNSSVNTTSLEDLRNKLAGRHVHNVSNVHLHTDGEVVTNVSYAFWIMAIINLPVPIAIFVLVYRERLFMCGSDPSRRLLDGDVLAIKPRGTSILAEDTGQKETSNSHADLFSCCLLGKAHSFPLSFFGIHVLGGLVLFFSDGIVGSYTGFVYTYAVAPPMNLPHKTAGYLTCIFWAAITTGRLSAIPLSYRFKPVRLLIVSQVGVIVTVLLLLIFSNSSVFLFIGTCCLGLFISSIFPCMLALTEDILEYKGCATTVLVTSAGMGEMVLQVLVGSVMHSRGSFSFLLCGMIFGCLGFTFFTFLYFVQQSHKSYTEALPGNSPVERHEENGIKTCSAAVLNSWDAPEHKTSLDP</sequence>
<accession>Q7SXB7</accession>
<comment type="subcellular location">
    <subcellularLocation>
        <location evidence="2">Membrane</location>
        <topology evidence="2">Multi-pass membrane protein</topology>
    </subcellularLocation>
</comment>
<comment type="similarity">
    <text evidence="2">Belongs to the major facilitator superfamily.</text>
</comment>
<evidence type="ECO:0000255" key="1"/>
<evidence type="ECO:0000305" key="2"/>
<keyword id="KW-0472">Membrane</keyword>
<keyword id="KW-1185">Reference proteome</keyword>
<keyword id="KW-0812">Transmembrane</keyword>
<keyword id="KW-1133">Transmembrane helix</keyword>
<keyword id="KW-0813">Transport</keyword>
<proteinExistence type="evidence at transcript level"/>
<dbReference type="EMBL" id="BC055671">
    <property type="protein sequence ID" value="AAH55671.1"/>
    <property type="molecule type" value="mRNA"/>
</dbReference>
<dbReference type="RefSeq" id="NP_956825.1">
    <property type="nucleotide sequence ID" value="NM_200531.1"/>
</dbReference>
<dbReference type="FunCoup" id="Q7SXB7">
    <property type="interactions" value="5"/>
</dbReference>
<dbReference type="STRING" id="7955.ENSDARP00000032062"/>
<dbReference type="TCDB" id="2.A.1.7.15">
    <property type="family name" value="the major facilitator superfamily (mfs)"/>
</dbReference>
<dbReference type="PaxDb" id="7955-ENSDARP00000032062"/>
<dbReference type="GeneID" id="393503"/>
<dbReference type="KEGG" id="dre:393503"/>
<dbReference type="AGR" id="ZFIN:ZDB-GENE-040426-1643"/>
<dbReference type="CTD" id="393503"/>
<dbReference type="ZFIN" id="ZDB-GENE-040426-1643">
    <property type="gene designation" value="mfsd4aa"/>
</dbReference>
<dbReference type="eggNOG" id="ENOG502QRVK">
    <property type="taxonomic scope" value="Eukaryota"/>
</dbReference>
<dbReference type="InParanoid" id="Q7SXB7"/>
<dbReference type="OrthoDB" id="413079at2759"/>
<dbReference type="PhylomeDB" id="Q7SXB7"/>
<dbReference type="PRO" id="PR:Q7SXB7"/>
<dbReference type="Proteomes" id="UP000000437">
    <property type="component" value="Chromosome 11"/>
</dbReference>
<dbReference type="GO" id="GO:0016020">
    <property type="term" value="C:membrane"/>
    <property type="evidence" value="ECO:0007669"/>
    <property type="project" value="UniProtKB-SubCell"/>
</dbReference>
<dbReference type="GO" id="GO:0022857">
    <property type="term" value="F:transmembrane transporter activity"/>
    <property type="evidence" value="ECO:0007669"/>
    <property type="project" value="InterPro"/>
</dbReference>
<dbReference type="FunFam" id="1.20.1250.20:FF:000200">
    <property type="entry name" value="Major facilitator superfamily domain-containing protein 4A"/>
    <property type="match status" value="1"/>
</dbReference>
<dbReference type="Gene3D" id="1.20.1250.20">
    <property type="entry name" value="MFS general substrate transporter like domains"/>
    <property type="match status" value="2"/>
</dbReference>
<dbReference type="InterPro" id="IPR011701">
    <property type="entry name" value="MFS"/>
</dbReference>
<dbReference type="InterPro" id="IPR036259">
    <property type="entry name" value="MFS_trans_sf"/>
</dbReference>
<dbReference type="PANTHER" id="PTHR23121:SF10">
    <property type="entry name" value="MAJOR FACILITATOR SUPERFAMILY DOMAIN-CONTAINING PROTEIN 4A"/>
    <property type="match status" value="1"/>
</dbReference>
<dbReference type="PANTHER" id="PTHR23121">
    <property type="entry name" value="SODIUM-DEPENDENT GLUCOSE TRANSPORTER 1"/>
    <property type="match status" value="1"/>
</dbReference>
<dbReference type="Pfam" id="PF07690">
    <property type="entry name" value="MFS_1"/>
    <property type="match status" value="1"/>
</dbReference>
<dbReference type="SUPFAM" id="SSF103473">
    <property type="entry name" value="MFS general substrate transporter"/>
    <property type="match status" value="1"/>
</dbReference>
<reference key="1">
    <citation type="submission" date="2003-08" db="EMBL/GenBank/DDBJ databases">
        <authorList>
            <consortium name="NIH - Zebrafish Gene Collection (ZGC) project"/>
        </authorList>
    </citation>
    <scope>NUCLEOTIDE SEQUENCE [LARGE SCALE MRNA]</scope>
    <source>
        <strain>AB</strain>
    </source>
</reference>
<organism>
    <name type="scientific">Danio rerio</name>
    <name type="common">Zebrafish</name>
    <name type="synonym">Brachydanio rerio</name>
    <dbReference type="NCBI Taxonomy" id="7955"/>
    <lineage>
        <taxon>Eukaryota</taxon>
        <taxon>Metazoa</taxon>
        <taxon>Chordata</taxon>
        <taxon>Craniata</taxon>
        <taxon>Vertebrata</taxon>
        <taxon>Euteleostomi</taxon>
        <taxon>Actinopterygii</taxon>
        <taxon>Neopterygii</taxon>
        <taxon>Teleostei</taxon>
        <taxon>Ostariophysi</taxon>
        <taxon>Cypriniformes</taxon>
        <taxon>Danionidae</taxon>
        <taxon>Danioninae</taxon>
        <taxon>Danio</taxon>
    </lineage>
</organism>
<feature type="chain" id="PRO_0000273398" description="Major facilitator superfamily domain-containing protein 4A">
    <location>
        <begin position="1"/>
        <end position="526"/>
    </location>
</feature>
<feature type="transmembrane region" description="Helical" evidence="1">
    <location>
        <begin position="21"/>
        <end position="41"/>
    </location>
</feature>
<feature type="transmembrane region" description="Helical" evidence="1">
    <location>
        <begin position="55"/>
        <end position="75"/>
    </location>
</feature>
<feature type="transmembrane region" description="Helical" evidence="1">
    <location>
        <begin position="84"/>
        <end position="104"/>
    </location>
</feature>
<feature type="transmembrane region" description="Helical" evidence="1">
    <location>
        <begin position="107"/>
        <end position="127"/>
    </location>
</feature>
<feature type="transmembrane region" description="Helical" evidence="1">
    <location>
        <begin position="142"/>
        <end position="162"/>
    </location>
</feature>
<feature type="transmembrane region" description="Helical" evidence="1">
    <location>
        <begin position="215"/>
        <end position="235"/>
    </location>
</feature>
<feature type="transmembrane region" description="Helical" evidence="1">
    <location>
        <begin position="297"/>
        <end position="317"/>
    </location>
</feature>
<feature type="transmembrane region" description="Helical" evidence="1">
    <location>
        <begin position="341"/>
        <end position="361"/>
    </location>
</feature>
<feature type="transmembrane region" description="Helical" evidence="1">
    <location>
        <begin position="377"/>
        <end position="397"/>
    </location>
</feature>
<feature type="transmembrane region" description="Helical" evidence="1">
    <location>
        <begin position="401"/>
        <end position="421"/>
    </location>
</feature>
<feature type="transmembrane region" description="Helical" evidence="1">
    <location>
        <begin position="430"/>
        <end position="450"/>
    </location>
</feature>
<feature type="transmembrane region" description="Helical" evidence="1">
    <location>
        <begin position="458"/>
        <end position="478"/>
    </location>
</feature>
<name>MFD4A_DANRE</name>